<accession>P50403</accession>
<keyword id="KW-0106">Calcium</keyword>
<keyword id="KW-0176">Collagen</keyword>
<keyword id="KW-1015">Disulfide bond</keyword>
<keyword id="KW-0272">Extracellular matrix</keyword>
<keyword id="KW-0305">Gaseous exchange</keyword>
<keyword id="KW-0325">Glycoprotein</keyword>
<keyword id="KW-0379">Hydroxylation</keyword>
<keyword id="KW-0430">Lectin</keyword>
<keyword id="KW-0479">Metal-binding</keyword>
<keyword id="KW-1185">Reference proteome</keyword>
<keyword id="KW-0677">Repeat</keyword>
<keyword id="KW-0964">Secreted</keyword>
<keyword id="KW-0732">Signal</keyword>
<keyword id="KW-0767">Surface film</keyword>
<comment type="function">
    <text evidence="2">In presence of calcium ions, it binds to surfactant phospholipids and contributes to lower the surface tension at the air-liquid interface in the alveoli of the mammalian lung and is essential for normal respiration. Enhances the expression of MYO18A/SP-R210 on alveolar macrophages.</text>
</comment>
<comment type="subunit">
    <text evidence="3">Oligomeric complex of 6 set of homotrimers.</text>
</comment>
<comment type="subcellular location">
    <subcellularLocation>
        <location evidence="3">Secreted</location>
    </subcellularLocation>
    <subcellularLocation>
        <location evidence="3">Secreted</location>
        <location evidence="3">Extracellular space</location>
        <location evidence="3">Extracellular matrix</location>
    </subcellularLocation>
    <subcellularLocation>
        <location evidence="3">Secreted</location>
        <location evidence="3">Extracellular space</location>
        <location evidence="3">Surface film</location>
    </subcellularLocation>
</comment>
<comment type="miscellaneous">
    <text>Pulmonary surfactant consists of 90% lipid and 10% protein. There are 4 surfactant-associated proteins: 2 collagenous, carbohydrate-binding glycoproteins (SP-A and SP-D) and 2 small hydrophobic proteins (SP-B and SP-C).</text>
</comment>
<comment type="similarity">
    <text evidence="7">Belongs to the SFTPA family.</text>
</comment>
<name>SFTPA_CAVPO</name>
<protein>
    <recommendedName>
        <fullName>Pulmonary surfactant-associated protein A</fullName>
        <shortName>PSAP</shortName>
        <shortName>PSP-A</shortName>
        <shortName>SP-A</shortName>
    </recommendedName>
</protein>
<sequence length="247" mass="26105">MWCSLALILILVTVSGIMCNRTDFCVGSPGIPGTPGSHGLPGRDGRDGVKGDPGPPGPMGPPGVMPGFPGCNGMNGIPGAPGERGDKGDPGERGPPGLPASLDEEIQTIFHNLKHKILQLTGVLSLQGSMLAVGDKVFATNGQSVDFNAIKETCARAGGDVAAPRNSEENTAISSIVKKYNIYSYLGLTEGHTPGDFHYLDGSPLNYTNWYPGEPRGRGKEKCAEMYLDGTWNDKNCLQSRLTICEF</sequence>
<reference key="1">
    <citation type="journal article" date="1997" name="Am. J. Physiol.">
        <title>Cloning of guinea pig surfactant protein A defines a distinct cellular distribution pattern within the lung.</title>
        <authorList>
            <person name="Yuan H.T."/>
            <person name="Gowan S."/>
            <person name="Kelly F.J."/>
            <person name="Bingle C.D."/>
        </authorList>
    </citation>
    <scope>NUCLEOTIDE SEQUENCE [MRNA]</scope>
    <source>
        <strain>Hartley</strain>
        <tissue>Lung</tissue>
    </source>
</reference>
<feature type="signal peptide" evidence="4">
    <location>
        <begin position="1"/>
        <end position="19"/>
    </location>
</feature>
<feature type="chain" id="PRO_0000017455" description="Pulmonary surfactant-associated protein A">
    <location>
        <begin position="20"/>
        <end position="247"/>
    </location>
</feature>
<feature type="domain" description="Collagen-like">
    <location>
        <begin position="27"/>
        <end position="99"/>
    </location>
</feature>
<feature type="domain" description="C-type lectin" evidence="5">
    <location>
        <begin position="131"/>
        <end position="247"/>
    </location>
</feature>
<feature type="region of interest" description="Disordered" evidence="6">
    <location>
        <begin position="32"/>
        <end position="101"/>
    </location>
</feature>
<feature type="compositionally biased region" description="Basic and acidic residues" evidence="6">
    <location>
        <begin position="41"/>
        <end position="50"/>
    </location>
</feature>
<feature type="compositionally biased region" description="Pro residues" evidence="6">
    <location>
        <begin position="53"/>
        <end position="64"/>
    </location>
</feature>
<feature type="compositionally biased region" description="Basic and acidic residues" evidence="6">
    <location>
        <begin position="83"/>
        <end position="92"/>
    </location>
</feature>
<feature type="binding site" evidence="1">
    <location>
        <position position="214"/>
    </location>
    <ligand>
        <name>Ca(2+)</name>
        <dbReference type="ChEBI" id="CHEBI:29108"/>
    </ligand>
</feature>
<feature type="binding site" evidence="1">
    <location>
        <position position="216"/>
    </location>
    <ligand>
        <name>Ca(2+)</name>
        <dbReference type="ChEBI" id="CHEBI:29108"/>
    </ligand>
</feature>
<feature type="binding site" evidence="1">
    <location>
        <position position="233"/>
    </location>
    <ligand>
        <name>Ca(2+)</name>
        <dbReference type="ChEBI" id="CHEBI:29108"/>
    </ligand>
</feature>
<feature type="binding site" evidence="1">
    <location>
        <position position="234"/>
    </location>
    <ligand>
        <name>Ca(2+)</name>
        <dbReference type="ChEBI" id="CHEBI:29108"/>
    </ligand>
</feature>
<feature type="modified residue" description="4-hydroxyproline" evidence="1">
    <location>
        <position position="29"/>
    </location>
</feature>
<feature type="modified residue" description="4-hydroxyproline" evidence="1">
    <location>
        <position position="32"/>
    </location>
</feature>
<feature type="modified residue" description="4-hydroxyproline" evidence="1">
    <location>
        <position position="35"/>
    </location>
</feature>
<feature type="modified residue" description="4-hydroxyproline" evidence="1">
    <location>
        <position position="41"/>
    </location>
</feature>
<feature type="modified residue" description="4-hydroxyproline" evidence="1">
    <location>
        <position position="53"/>
    </location>
</feature>
<feature type="modified residue" description="4-hydroxyproline" evidence="1">
    <location>
        <position position="56"/>
    </location>
</feature>
<feature type="modified residue" description="4-hydroxyproline" evidence="1">
    <location>
        <position position="62"/>
    </location>
</feature>
<feature type="modified residue" description="4-hydroxyproline" evidence="1">
    <location>
        <position position="66"/>
    </location>
</feature>
<feature type="modified residue" description="4-hydroxyproline" evidence="1">
    <location>
        <position position="69"/>
    </location>
</feature>
<feature type="glycosylation site" description="N-linked (GlcNAc...) asparagine" evidence="4">
    <location>
        <position position="20"/>
    </location>
</feature>
<feature type="glycosylation site" description="N-linked (GlcNAc...) asparagine" evidence="1">
    <location>
        <position position="206"/>
    </location>
</feature>
<feature type="disulfide bond" description="Interchain" evidence="5">
    <location>
        <position position="25"/>
    </location>
</feature>
<feature type="disulfide bond" evidence="5">
    <location>
        <begin position="154"/>
        <end position="245"/>
    </location>
</feature>
<feature type="disulfide bond" evidence="5">
    <location>
        <begin position="223"/>
        <end position="237"/>
    </location>
</feature>
<evidence type="ECO:0000250" key="1"/>
<evidence type="ECO:0000250" key="2">
    <source>
        <dbReference type="UniProtKB" id="P35242"/>
    </source>
</evidence>
<evidence type="ECO:0000250" key="3">
    <source>
        <dbReference type="UniProtKB" id="Q8IWL2"/>
    </source>
</evidence>
<evidence type="ECO:0000255" key="4"/>
<evidence type="ECO:0000255" key="5">
    <source>
        <dbReference type="PROSITE-ProRule" id="PRU00040"/>
    </source>
</evidence>
<evidence type="ECO:0000256" key="6">
    <source>
        <dbReference type="SAM" id="MobiDB-lite"/>
    </source>
</evidence>
<evidence type="ECO:0000305" key="7"/>
<organism>
    <name type="scientific">Cavia porcellus</name>
    <name type="common">Guinea pig</name>
    <dbReference type="NCBI Taxonomy" id="10141"/>
    <lineage>
        <taxon>Eukaryota</taxon>
        <taxon>Metazoa</taxon>
        <taxon>Chordata</taxon>
        <taxon>Craniata</taxon>
        <taxon>Vertebrata</taxon>
        <taxon>Euteleostomi</taxon>
        <taxon>Mammalia</taxon>
        <taxon>Eutheria</taxon>
        <taxon>Euarchontoglires</taxon>
        <taxon>Glires</taxon>
        <taxon>Rodentia</taxon>
        <taxon>Hystricomorpha</taxon>
        <taxon>Caviidae</taxon>
        <taxon>Cavia</taxon>
    </lineage>
</organism>
<gene>
    <name type="primary">SFTPA1</name>
    <name type="synonym">SFTP1</name>
    <name type="synonym">SFTPA</name>
</gene>
<proteinExistence type="evidence at transcript level"/>
<dbReference type="EMBL" id="U40869">
    <property type="protein sequence ID" value="AAB82952.1"/>
    <property type="molecule type" value="mRNA"/>
</dbReference>
<dbReference type="RefSeq" id="NP_001166485.1">
    <property type="nucleotide sequence ID" value="NM_001173014.1"/>
</dbReference>
<dbReference type="SMR" id="P50403"/>
<dbReference type="FunCoup" id="P50403">
    <property type="interactions" value="88"/>
</dbReference>
<dbReference type="STRING" id="10141.ENSCPOP00000022297"/>
<dbReference type="GlyCosmos" id="P50403">
    <property type="glycosylation" value="2 sites, No reported glycans"/>
</dbReference>
<dbReference type="Ensembl" id="ENSCPOT00000047404.1">
    <property type="protein sequence ID" value="ENSCPOP00000022297.1"/>
    <property type="gene ID" value="ENSCPOG00000032092.1"/>
</dbReference>
<dbReference type="GeneID" id="100135615"/>
<dbReference type="KEGG" id="cpoc:100135615"/>
<dbReference type="CTD" id="653509"/>
<dbReference type="VEuPathDB" id="HostDB:ENSCPOG00000032092"/>
<dbReference type="eggNOG" id="KOG4297">
    <property type="taxonomic scope" value="Eukaryota"/>
</dbReference>
<dbReference type="GeneTree" id="ENSGT00940000156653"/>
<dbReference type="HOGENOM" id="CLU_049894_3_0_1"/>
<dbReference type="InParanoid" id="P50403"/>
<dbReference type="OMA" id="VRKHNTY"/>
<dbReference type="OrthoDB" id="7357196at2759"/>
<dbReference type="TreeFam" id="TF330481"/>
<dbReference type="Proteomes" id="UP000005447">
    <property type="component" value="Unassembled WGS sequence"/>
</dbReference>
<dbReference type="Bgee" id="ENSCPOG00000032092">
    <property type="expression patterns" value="Expressed in testis"/>
</dbReference>
<dbReference type="GO" id="GO:0005581">
    <property type="term" value="C:collagen trimer"/>
    <property type="evidence" value="ECO:0007669"/>
    <property type="project" value="UniProtKB-KW"/>
</dbReference>
<dbReference type="GO" id="GO:0005615">
    <property type="term" value="C:extracellular space"/>
    <property type="evidence" value="ECO:0007669"/>
    <property type="project" value="TreeGrafter"/>
</dbReference>
<dbReference type="GO" id="GO:0005771">
    <property type="term" value="C:multivesicular body"/>
    <property type="evidence" value="ECO:0007669"/>
    <property type="project" value="TreeGrafter"/>
</dbReference>
<dbReference type="GO" id="GO:0030246">
    <property type="term" value="F:carbohydrate binding"/>
    <property type="evidence" value="ECO:0007669"/>
    <property type="project" value="UniProtKB-KW"/>
</dbReference>
<dbReference type="GO" id="GO:0046872">
    <property type="term" value="F:metal ion binding"/>
    <property type="evidence" value="ECO:0007669"/>
    <property type="project" value="UniProtKB-KW"/>
</dbReference>
<dbReference type="GO" id="GO:0007585">
    <property type="term" value="P:respiratory gaseous exchange by respiratory system"/>
    <property type="evidence" value="ECO:0007669"/>
    <property type="project" value="UniProtKB-KW"/>
</dbReference>
<dbReference type="CDD" id="cd03591">
    <property type="entry name" value="CLECT_collectin_like"/>
    <property type="match status" value="1"/>
</dbReference>
<dbReference type="FunFam" id="3.10.100.10:FF:000056">
    <property type="entry name" value="Pulmonary surfactant-associated protein A"/>
    <property type="match status" value="1"/>
</dbReference>
<dbReference type="Gene3D" id="3.10.100.10">
    <property type="entry name" value="Mannose-Binding Protein A, subunit A"/>
    <property type="match status" value="1"/>
</dbReference>
<dbReference type="InterPro" id="IPR001304">
    <property type="entry name" value="C-type_lectin-like"/>
</dbReference>
<dbReference type="InterPro" id="IPR016186">
    <property type="entry name" value="C-type_lectin-like/link_sf"/>
</dbReference>
<dbReference type="InterPro" id="IPR018378">
    <property type="entry name" value="C-type_lectin_CS"/>
</dbReference>
<dbReference type="InterPro" id="IPR051077">
    <property type="entry name" value="Ca-dependent_lectin"/>
</dbReference>
<dbReference type="InterPro" id="IPR033990">
    <property type="entry name" value="Collectin_CTLD"/>
</dbReference>
<dbReference type="InterPro" id="IPR016187">
    <property type="entry name" value="CTDL_fold"/>
</dbReference>
<dbReference type="PANTHER" id="PTHR24024">
    <property type="entry name" value="PULMONARY SURFACTANT-ASSOCIATED PROTEIN A"/>
    <property type="match status" value="1"/>
</dbReference>
<dbReference type="PANTHER" id="PTHR24024:SF13">
    <property type="entry name" value="PULMONARY SURFACTANT-ASSOCIATED PROTEIN A1"/>
    <property type="match status" value="1"/>
</dbReference>
<dbReference type="Pfam" id="PF00059">
    <property type="entry name" value="Lectin_C"/>
    <property type="match status" value="1"/>
</dbReference>
<dbReference type="SMART" id="SM00034">
    <property type="entry name" value="CLECT"/>
    <property type="match status" value="1"/>
</dbReference>
<dbReference type="SUPFAM" id="SSF56436">
    <property type="entry name" value="C-type lectin-like"/>
    <property type="match status" value="1"/>
</dbReference>
<dbReference type="SUPFAM" id="SSF57944">
    <property type="entry name" value="Triple coiled coil domain of C-type lectins"/>
    <property type="match status" value="1"/>
</dbReference>
<dbReference type="PROSITE" id="PS00615">
    <property type="entry name" value="C_TYPE_LECTIN_1"/>
    <property type="match status" value="1"/>
</dbReference>
<dbReference type="PROSITE" id="PS50041">
    <property type="entry name" value="C_TYPE_LECTIN_2"/>
    <property type="match status" value="1"/>
</dbReference>